<organism>
    <name type="scientific">Staphylococcus aureus (strain bovine RF122 / ET3-1)</name>
    <dbReference type="NCBI Taxonomy" id="273036"/>
    <lineage>
        <taxon>Bacteria</taxon>
        <taxon>Bacillati</taxon>
        <taxon>Bacillota</taxon>
        <taxon>Bacilli</taxon>
        <taxon>Bacillales</taxon>
        <taxon>Staphylococcaceae</taxon>
        <taxon>Staphylococcus</taxon>
    </lineage>
</organism>
<feature type="chain" id="PRO_1000070330" description="Ribonuclease Z">
    <location>
        <begin position="1"/>
        <end position="306"/>
    </location>
</feature>
<feature type="active site" description="Proton acceptor" evidence="1">
    <location>
        <position position="67"/>
    </location>
</feature>
<feature type="binding site" evidence="1">
    <location>
        <position position="63"/>
    </location>
    <ligand>
        <name>Zn(2+)</name>
        <dbReference type="ChEBI" id="CHEBI:29105"/>
        <label>1</label>
        <note>catalytic</note>
    </ligand>
</feature>
<feature type="binding site" evidence="1">
    <location>
        <position position="65"/>
    </location>
    <ligand>
        <name>Zn(2+)</name>
        <dbReference type="ChEBI" id="CHEBI:29105"/>
        <label>1</label>
        <note>catalytic</note>
    </ligand>
</feature>
<feature type="binding site" evidence="1">
    <location>
        <position position="67"/>
    </location>
    <ligand>
        <name>Zn(2+)</name>
        <dbReference type="ChEBI" id="CHEBI:29105"/>
        <label>2</label>
        <note>catalytic</note>
    </ligand>
</feature>
<feature type="binding site" evidence="1">
    <location>
        <position position="68"/>
    </location>
    <ligand>
        <name>Zn(2+)</name>
        <dbReference type="ChEBI" id="CHEBI:29105"/>
        <label>2</label>
        <note>catalytic</note>
    </ligand>
</feature>
<feature type="binding site" evidence="1">
    <location>
        <position position="141"/>
    </location>
    <ligand>
        <name>Zn(2+)</name>
        <dbReference type="ChEBI" id="CHEBI:29105"/>
        <label>1</label>
        <note>catalytic</note>
    </ligand>
</feature>
<feature type="binding site" evidence="1">
    <location>
        <position position="211"/>
    </location>
    <ligand>
        <name>Zn(2+)</name>
        <dbReference type="ChEBI" id="CHEBI:29105"/>
        <label>1</label>
        <note>catalytic</note>
    </ligand>
</feature>
<feature type="binding site" evidence="1">
    <location>
        <position position="211"/>
    </location>
    <ligand>
        <name>Zn(2+)</name>
        <dbReference type="ChEBI" id="CHEBI:29105"/>
        <label>2</label>
        <note>catalytic</note>
    </ligand>
</feature>
<feature type="binding site" evidence="1">
    <location>
        <position position="269"/>
    </location>
    <ligand>
        <name>Zn(2+)</name>
        <dbReference type="ChEBI" id="CHEBI:29105"/>
        <label>2</label>
        <note>catalytic</note>
    </ligand>
</feature>
<keyword id="KW-0255">Endonuclease</keyword>
<keyword id="KW-0378">Hydrolase</keyword>
<keyword id="KW-0479">Metal-binding</keyword>
<keyword id="KW-0540">Nuclease</keyword>
<keyword id="KW-0819">tRNA processing</keyword>
<keyword id="KW-0862">Zinc</keyword>
<name>RNZ_STAAB</name>
<reference key="1">
    <citation type="journal article" date="2007" name="PLoS ONE">
        <title>Molecular correlates of host specialization in Staphylococcus aureus.</title>
        <authorList>
            <person name="Herron-Olson L."/>
            <person name="Fitzgerald J.R."/>
            <person name="Musser J.M."/>
            <person name="Kapur V."/>
        </authorList>
    </citation>
    <scope>NUCLEOTIDE SEQUENCE [LARGE SCALE GENOMIC DNA]</scope>
    <source>
        <strain>bovine RF122 / ET3-1</strain>
    </source>
</reference>
<sequence>MEVTFFGTSAGLPTKERNTQAIALNLEPYSNSIWLFDVGEGTQHQILHHAIKLGKVTHIFITHMHGDHIFGLPGLLSSRSFQGGEQKPLTLVGPKGIKAYVEMSMNLSESHLNYPITYIEIDDHLTYHHDGFTVEAHLLNHGIPSYGYRVMAPETTGTINVEALKNIGLEPGPKYQEVKSHDTFEHNGQVYQSKDFRGESKQGPIVAIFGDTKPCSNERVISRDADVMVHEATYIDGEKHLANNYHHSHIEDVFALIKEANVKRTLITHLSNRYNTEDINEIYQTLIQNEDTPNFNFVKDFDSFKI</sequence>
<protein>
    <recommendedName>
        <fullName evidence="1">Ribonuclease Z</fullName>
        <shortName evidence="1">RNase Z</shortName>
        <ecNumber evidence="1">3.1.26.11</ecNumber>
    </recommendedName>
    <alternativeName>
        <fullName evidence="1">tRNA 3 endonuclease</fullName>
    </alternativeName>
    <alternativeName>
        <fullName evidence="1">tRNase Z</fullName>
    </alternativeName>
</protein>
<proteinExistence type="inferred from homology"/>
<evidence type="ECO:0000255" key="1">
    <source>
        <dbReference type="HAMAP-Rule" id="MF_01818"/>
    </source>
</evidence>
<comment type="function">
    <text evidence="1">Zinc phosphodiesterase, which displays some tRNA 3'-processing endonuclease activity. Probably involved in tRNA maturation, by removing a 3'-trailer from precursor tRNA.</text>
</comment>
<comment type="catalytic activity">
    <reaction evidence="1">
        <text>Endonucleolytic cleavage of RNA, removing extra 3' nucleotides from tRNA precursor, generating 3' termini of tRNAs. A 3'-hydroxy group is left at the tRNA terminus and a 5'-phosphoryl group is left at the trailer molecule.</text>
        <dbReference type="EC" id="3.1.26.11"/>
    </reaction>
</comment>
<comment type="cofactor">
    <cofactor evidence="1">
        <name>Zn(2+)</name>
        <dbReference type="ChEBI" id="CHEBI:29105"/>
    </cofactor>
    <text evidence="1">Binds 2 Zn(2+) ions.</text>
</comment>
<comment type="subunit">
    <text evidence="1">Homodimer.</text>
</comment>
<comment type="similarity">
    <text evidence="1">Belongs to the RNase Z family.</text>
</comment>
<accession>Q2YYA2</accession>
<dbReference type="EC" id="3.1.26.11" evidence="1"/>
<dbReference type="EMBL" id="AJ938182">
    <property type="protein sequence ID" value="CAI81054.1"/>
    <property type="molecule type" value="Genomic_DNA"/>
</dbReference>
<dbReference type="RefSeq" id="WP_000454059.1">
    <property type="nucleotide sequence ID" value="NC_007622.1"/>
</dbReference>
<dbReference type="SMR" id="Q2YYA2"/>
<dbReference type="KEGG" id="sab:SAB1365c"/>
<dbReference type="HOGENOM" id="CLU_031317_2_0_9"/>
<dbReference type="GO" id="GO:0042781">
    <property type="term" value="F:3'-tRNA processing endoribonuclease activity"/>
    <property type="evidence" value="ECO:0007669"/>
    <property type="project" value="UniProtKB-UniRule"/>
</dbReference>
<dbReference type="GO" id="GO:0008270">
    <property type="term" value="F:zinc ion binding"/>
    <property type="evidence" value="ECO:0007669"/>
    <property type="project" value="UniProtKB-UniRule"/>
</dbReference>
<dbReference type="CDD" id="cd07717">
    <property type="entry name" value="RNaseZ_ZiPD-like_MBL-fold"/>
    <property type="match status" value="1"/>
</dbReference>
<dbReference type="FunFam" id="3.60.15.10:FF:000002">
    <property type="entry name" value="Ribonuclease Z"/>
    <property type="match status" value="1"/>
</dbReference>
<dbReference type="Gene3D" id="3.60.15.10">
    <property type="entry name" value="Ribonuclease Z/Hydroxyacylglutathione hydrolase-like"/>
    <property type="match status" value="1"/>
</dbReference>
<dbReference type="HAMAP" id="MF_01818">
    <property type="entry name" value="RNase_Z_BN"/>
    <property type="match status" value="1"/>
</dbReference>
<dbReference type="InterPro" id="IPR036866">
    <property type="entry name" value="RibonucZ/Hydroxyglut_hydro"/>
</dbReference>
<dbReference type="InterPro" id="IPR013471">
    <property type="entry name" value="RNase_Z/BN"/>
</dbReference>
<dbReference type="InterPro" id="IPR027794">
    <property type="entry name" value="tRNase_Z_dom"/>
</dbReference>
<dbReference type="NCBIfam" id="NF000801">
    <property type="entry name" value="PRK00055.1-3"/>
    <property type="match status" value="1"/>
</dbReference>
<dbReference type="NCBIfam" id="TIGR02651">
    <property type="entry name" value="RNase_Z"/>
    <property type="match status" value="1"/>
</dbReference>
<dbReference type="PANTHER" id="PTHR46018">
    <property type="entry name" value="ZINC PHOSPHODIESTERASE ELAC PROTEIN 1"/>
    <property type="match status" value="1"/>
</dbReference>
<dbReference type="PANTHER" id="PTHR46018:SF2">
    <property type="entry name" value="ZINC PHOSPHODIESTERASE ELAC PROTEIN 1"/>
    <property type="match status" value="1"/>
</dbReference>
<dbReference type="Pfam" id="PF13691">
    <property type="entry name" value="Lactamase_B_4"/>
    <property type="match status" value="1"/>
</dbReference>
<dbReference type="SUPFAM" id="SSF56281">
    <property type="entry name" value="Metallo-hydrolase/oxidoreductase"/>
    <property type="match status" value="1"/>
</dbReference>
<gene>
    <name evidence="1" type="primary">rnz</name>
    <name type="ordered locus">SAB1365c</name>
</gene>